<evidence type="ECO:0000255" key="1">
    <source>
        <dbReference type="HAMAP-Rule" id="MF_00384"/>
    </source>
</evidence>
<feature type="chain" id="PRO_1000049110" description="Homoserine kinase">
    <location>
        <begin position="1"/>
        <end position="312"/>
    </location>
</feature>
<feature type="binding site" evidence="1">
    <location>
        <begin position="91"/>
        <end position="101"/>
    </location>
    <ligand>
        <name>ATP</name>
        <dbReference type="ChEBI" id="CHEBI:30616"/>
    </ligand>
</feature>
<sequence>MVRVYAPASIANIGVGFDTLGMAIAPINGSLLGDCISIEHANAFSLRSTGFFHSQLPIQLEENIVFQCWRKFCEILGQTYFLSIKLEKNIPVASGLGSSACSIVAVLVAMNYHCGCPLNTDQLLMLMGEMEGKISGSIHFDNVSPCFLGGMRLILQNCNIVNQVIPSFDDWLWIVAYPGIKISTAVSRSVLPNKYDREDCINHSQYLSGFVHACHTKQEYLAIRCMKDIIAEPYRSRLFPIELSCIRHNIMKRGAISCGISGSGPTVFVLCNNHDVIGDISDWLSRFYLQNNSGFIRICSLDNLGARIMVNN</sequence>
<protein>
    <recommendedName>
        <fullName evidence="1">Homoserine kinase</fullName>
        <shortName evidence="1">HK</shortName>
        <shortName evidence="1">HSK</shortName>
        <ecNumber evidence="1">2.7.1.39</ecNumber>
    </recommendedName>
</protein>
<proteinExistence type="inferred from homology"/>
<gene>
    <name evidence="1" type="primary">thrB</name>
    <name type="ordered locus">BPEN_116</name>
</gene>
<reference key="1">
    <citation type="journal article" date="2005" name="Genome Res.">
        <title>Genome sequence of Blochmannia pennsylvanicus indicates parallel evolutionary trends among bacterial mutualists of insects.</title>
        <authorList>
            <person name="Degnan P.H."/>
            <person name="Lazarus A.B."/>
            <person name="Wernegreen J.J."/>
        </authorList>
    </citation>
    <scope>NUCLEOTIDE SEQUENCE [LARGE SCALE GENOMIC DNA]</scope>
    <source>
        <strain>BPEN</strain>
    </source>
</reference>
<organism>
    <name type="scientific">Blochmanniella pennsylvanica (strain BPEN)</name>
    <dbReference type="NCBI Taxonomy" id="291272"/>
    <lineage>
        <taxon>Bacteria</taxon>
        <taxon>Pseudomonadati</taxon>
        <taxon>Pseudomonadota</taxon>
        <taxon>Gammaproteobacteria</taxon>
        <taxon>Enterobacterales</taxon>
        <taxon>Enterobacteriaceae</taxon>
        <taxon>ant endosymbionts</taxon>
        <taxon>Candidatus Blochmanniella</taxon>
    </lineage>
</organism>
<comment type="function">
    <text evidence="1">Catalyzes the ATP-dependent phosphorylation of L-homoserine to L-homoserine phosphate.</text>
</comment>
<comment type="catalytic activity">
    <reaction evidence="1">
        <text>L-homoserine + ATP = O-phospho-L-homoserine + ADP + H(+)</text>
        <dbReference type="Rhea" id="RHEA:13985"/>
        <dbReference type="ChEBI" id="CHEBI:15378"/>
        <dbReference type="ChEBI" id="CHEBI:30616"/>
        <dbReference type="ChEBI" id="CHEBI:57476"/>
        <dbReference type="ChEBI" id="CHEBI:57590"/>
        <dbReference type="ChEBI" id="CHEBI:456216"/>
        <dbReference type="EC" id="2.7.1.39"/>
    </reaction>
</comment>
<comment type="pathway">
    <text evidence="1">Amino-acid biosynthesis; L-threonine biosynthesis; L-threonine from L-aspartate: step 4/5.</text>
</comment>
<comment type="subcellular location">
    <subcellularLocation>
        <location evidence="1">Cytoplasm</location>
    </subcellularLocation>
</comment>
<comment type="similarity">
    <text evidence="1">Belongs to the GHMP kinase family. Homoserine kinase subfamily.</text>
</comment>
<dbReference type="EC" id="2.7.1.39" evidence="1"/>
<dbReference type="EMBL" id="CP000016">
    <property type="protein sequence ID" value="AAZ40756.1"/>
    <property type="molecule type" value="Genomic_DNA"/>
</dbReference>
<dbReference type="RefSeq" id="WP_011282663.1">
    <property type="nucleotide sequence ID" value="NC_007292.1"/>
</dbReference>
<dbReference type="SMR" id="Q493S9"/>
<dbReference type="STRING" id="291272.BPEN_116"/>
<dbReference type="KEGG" id="bpn:BPEN_116"/>
<dbReference type="eggNOG" id="COG0083">
    <property type="taxonomic scope" value="Bacteria"/>
</dbReference>
<dbReference type="HOGENOM" id="CLU_041243_1_1_6"/>
<dbReference type="OrthoDB" id="9769912at2"/>
<dbReference type="UniPathway" id="UPA00050">
    <property type="reaction ID" value="UER00064"/>
</dbReference>
<dbReference type="Proteomes" id="UP000007794">
    <property type="component" value="Chromosome"/>
</dbReference>
<dbReference type="GO" id="GO:0005737">
    <property type="term" value="C:cytoplasm"/>
    <property type="evidence" value="ECO:0007669"/>
    <property type="project" value="UniProtKB-SubCell"/>
</dbReference>
<dbReference type="GO" id="GO:0005524">
    <property type="term" value="F:ATP binding"/>
    <property type="evidence" value="ECO:0007669"/>
    <property type="project" value="UniProtKB-UniRule"/>
</dbReference>
<dbReference type="GO" id="GO:0004413">
    <property type="term" value="F:homoserine kinase activity"/>
    <property type="evidence" value="ECO:0007669"/>
    <property type="project" value="UniProtKB-UniRule"/>
</dbReference>
<dbReference type="GO" id="GO:0009088">
    <property type="term" value="P:threonine biosynthetic process"/>
    <property type="evidence" value="ECO:0007669"/>
    <property type="project" value="UniProtKB-UniRule"/>
</dbReference>
<dbReference type="Gene3D" id="3.30.230.10">
    <property type="match status" value="1"/>
</dbReference>
<dbReference type="Gene3D" id="3.30.70.890">
    <property type="entry name" value="GHMP kinase, C-terminal domain"/>
    <property type="match status" value="1"/>
</dbReference>
<dbReference type="HAMAP" id="MF_00384">
    <property type="entry name" value="Homoser_kinase"/>
    <property type="match status" value="1"/>
</dbReference>
<dbReference type="InterPro" id="IPR013750">
    <property type="entry name" value="GHMP_kinase_C_dom"/>
</dbReference>
<dbReference type="InterPro" id="IPR036554">
    <property type="entry name" value="GHMP_kinase_C_sf"/>
</dbReference>
<dbReference type="InterPro" id="IPR006204">
    <property type="entry name" value="GHMP_kinase_N_dom"/>
</dbReference>
<dbReference type="InterPro" id="IPR006203">
    <property type="entry name" value="GHMP_knse_ATP-bd_CS"/>
</dbReference>
<dbReference type="InterPro" id="IPR000870">
    <property type="entry name" value="Homoserine_kinase"/>
</dbReference>
<dbReference type="InterPro" id="IPR020568">
    <property type="entry name" value="Ribosomal_Su5_D2-typ_SF"/>
</dbReference>
<dbReference type="InterPro" id="IPR014721">
    <property type="entry name" value="Ribsml_uS5_D2-typ_fold_subgr"/>
</dbReference>
<dbReference type="NCBIfam" id="NF002288">
    <property type="entry name" value="PRK01212.1-4"/>
    <property type="match status" value="1"/>
</dbReference>
<dbReference type="NCBIfam" id="TIGR00191">
    <property type="entry name" value="thrB"/>
    <property type="match status" value="1"/>
</dbReference>
<dbReference type="PANTHER" id="PTHR20861:SF1">
    <property type="entry name" value="HOMOSERINE KINASE"/>
    <property type="match status" value="1"/>
</dbReference>
<dbReference type="PANTHER" id="PTHR20861">
    <property type="entry name" value="HOMOSERINE/4-DIPHOSPHOCYTIDYL-2-C-METHYL-D-ERYTHRITOL KINASE"/>
    <property type="match status" value="1"/>
</dbReference>
<dbReference type="Pfam" id="PF08544">
    <property type="entry name" value="GHMP_kinases_C"/>
    <property type="match status" value="1"/>
</dbReference>
<dbReference type="Pfam" id="PF00288">
    <property type="entry name" value="GHMP_kinases_N"/>
    <property type="match status" value="1"/>
</dbReference>
<dbReference type="PIRSF" id="PIRSF000676">
    <property type="entry name" value="Homoser_kin"/>
    <property type="match status" value="1"/>
</dbReference>
<dbReference type="PRINTS" id="PR00958">
    <property type="entry name" value="HOMSERKINASE"/>
</dbReference>
<dbReference type="SUPFAM" id="SSF55060">
    <property type="entry name" value="GHMP Kinase, C-terminal domain"/>
    <property type="match status" value="1"/>
</dbReference>
<dbReference type="SUPFAM" id="SSF54211">
    <property type="entry name" value="Ribosomal protein S5 domain 2-like"/>
    <property type="match status" value="1"/>
</dbReference>
<dbReference type="PROSITE" id="PS00627">
    <property type="entry name" value="GHMP_KINASES_ATP"/>
    <property type="match status" value="1"/>
</dbReference>
<keyword id="KW-0028">Amino-acid biosynthesis</keyword>
<keyword id="KW-0067">ATP-binding</keyword>
<keyword id="KW-0963">Cytoplasm</keyword>
<keyword id="KW-0418">Kinase</keyword>
<keyword id="KW-0547">Nucleotide-binding</keyword>
<keyword id="KW-1185">Reference proteome</keyword>
<keyword id="KW-0791">Threonine biosynthesis</keyword>
<keyword id="KW-0808">Transferase</keyword>
<accession>Q493S9</accession>
<name>KHSE_BLOPB</name>